<protein>
    <recommendedName>
        <fullName evidence="1">Malonyl-[acyl-carrier protein] O-methyltransferase</fullName>
        <shortName evidence="1">Malonyl-ACP O-methyltransferase</shortName>
        <ecNumber evidence="1">2.1.1.197</ecNumber>
    </recommendedName>
    <alternativeName>
        <fullName evidence="1">Biotin synthesis protein BioC</fullName>
    </alternativeName>
</protein>
<keyword id="KW-0093">Biotin biosynthesis</keyword>
<keyword id="KW-0489">Methyltransferase</keyword>
<keyword id="KW-1185">Reference proteome</keyword>
<keyword id="KW-0949">S-adenosyl-L-methionine</keyword>
<keyword id="KW-0808">Transferase</keyword>
<feature type="chain" id="PRO_0000412484" description="Malonyl-[acyl-carrier protein] O-methyltransferase">
    <location>
        <begin position="1"/>
        <end position="274"/>
    </location>
</feature>
<sequence>MDKQLIAERFAKARNTYTREALVQQQVAGKMIRILTDVLSSAEHLLPEEIAVRFRHIVEFGCGTGSYSRILLHTLHPETLLLNDLCREMEECVGELCSTQTAGRKKDGTEIRVSFLPGDAENFDFPKGTDLITSCSTLQWFNNPETFFLRCHHALTKDGILAFSTFGTKNMHQIRCLTGHGLYYLPIEELQALLSPYFNILHAEEEIVPLSFATPQAVLKHLKQTGVTGTEKRMWTRGRLQAFCEEYIRQFSSPPTGNVTLTYHPIYIIAKNKE</sequence>
<evidence type="ECO:0000255" key="1">
    <source>
        <dbReference type="HAMAP-Rule" id="MF_00835"/>
    </source>
</evidence>
<reference key="1">
    <citation type="journal article" date="2011" name="Stand. Genomic Sci.">
        <title>Complete genome sequence of Bacteroides helcogenes type strain (P 36-108).</title>
        <authorList>
            <person name="Pati A."/>
            <person name="Gronow S."/>
            <person name="Zeytun A."/>
            <person name="Lapidus A."/>
            <person name="Nolan M."/>
            <person name="Hammon N."/>
            <person name="Deshpande S."/>
            <person name="Cheng J.F."/>
            <person name="Tapia R."/>
            <person name="Han C."/>
            <person name="Goodwin L."/>
            <person name="Pitluck S."/>
            <person name="Liolios K."/>
            <person name="Pagani I."/>
            <person name="Ivanova N."/>
            <person name="Mavromatis K."/>
            <person name="Chen A."/>
            <person name="Palaniappan K."/>
            <person name="Land M."/>
            <person name="Hauser L."/>
            <person name="Chang Y.J."/>
            <person name="Jeffries C.D."/>
            <person name="Detter J.C."/>
            <person name="Brambilla E."/>
            <person name="Rohde M."/>
            <person name="Goker M."/>
            <person name="Woyke T."/>
            <person name="Bristow J."/>
            <person name="Eisen J.A."/>
            <person name="Markowitz V."/>
            <person name="Hugenholtz P."/>
            <person name="Kyrpides N.C."/>
            <person name="Klenk H.P."/>
            <person name="Lucas S."/>
        </authorList>
    </citation>
    <scope>NUCLEOTIDE SEQUENCE [LARGE SCALE GENOMIC DNA]</scope>
    <source>
        <strain>ATCC 35417 / DSM 20613 / JCM 6297 / CCUG 15421 / P 36-108</strain>
    </source>
</reference>
<accession>E6SRF9</accession>
<proteinExistence type="inferred from homology"/>
<name>BIOC_BACT6</name>
<organism>
    <name type="scientific">Bacteroides helcogenes (strain ATCC 35417 / DSM 20613 / JCM 6297 / CCUG 15421 / P 36-108)</name>
    <dbReference type="NCBI Taxonomy" id="693979"/>
    <lineage>
        <taxon>Bacteria</taxon>
        <taxon>Pseudomonadati</taxon>
        <taxon>Bacteroidota</taxon>
        <taxon>Bacteroidia</taxon>
        <taxon>Bacteroidales</taxon>
        <taxon>Bacteroidaceae</taxon>
        <taxon>Bacteroides</taxon>
    </lineage>
</organism>
<gene>
    <name evidence="1" type="primary">bioC</name>
    <name type="ordered locus">Bache_2091</name>
</gene>
<comment type="function">
    <text evidence="1">Converts the free carboxyl group of a malonyl-thioester to its methyl ester by transfer of a methyl group from S-adenosyl-L-methionine (SAM). It allows to synthesize pimeloyl-ACP via the fatty acid synthetic pathway.</text>
</comment>
<comment type="catalytic activity">
    <reaction evidence="1">
        <text>malonyl-[ACP] + S-adenosyl-L-methionine = malonyl-[ACP] methyl ester + S-adenosyl-L-homocysteine</text>
        <dbReference type="Rhea" id="RHEA:17105"/>
        <dbReference type="Rhea" id="RHEA-COMP:9623"/>
        <dbReference type="Rhea" id="RHEA-COMP:9954"/>
        <dbReference type="ChEBI" id="CHEBI:57856"/>
        <dbReference type="ChEBI" id="CHEBI:59789"/>
        <dbReference type="ChEBI" id="CHEBI:78449"/>
        <dbReference type="ChEBI" id="CHEBI:78845"/>
        <dbReference type="EC" id="2.1.1.197"/>
    </reaction>
</comment>
<comment type="pathway">
    <text evidence="1">Cofactor biosynthesis; biotin biosynthesis.</text>
</comment>
<comment type="similarity">
    <text evidence="1">Belongs to the methyltransferase superfamily.</text>
</comment>
<dbReference type="EC" id="2.1.1.197" evidence="1"/>
<dbReference type="EMBL" id="CP002352">
    <property type="protein sequence ID" value="ADV44062.1"/>
    <property type="molecule type" value="Genomic_DNA"/>
</dbReference>
<dbReference type="RefSeq" id="WP_013547655.1">
    <property type="nucleotide sequence ID" value="NC_014933.1"/>
</dbReference>
<dbReference type="SMR" id="E6SRF9"/>
<dbReference type="STRING" id="693979.Bache_2091"/>
<dbReference type="KEGG" id="bhl:Bache_2091"/>
<dbReference type="PATRIC" id="fig|693979.3.peg.2201"/>
<dbReference type="eggNOG" id="COG2226">
    <property type="taxonomic scope" value="Bacteria"/>
</dbReference>
<dbReference type="HOGENOM" id="CLU_046586_1_0_10"/>
<dbReference type="OrthoDB" id="9760689at2"/>
<dbReference type="UniPathway" id="UPA00078"/>
<dbReference type="Proteomes" id="UP000008630">
    <property type="component" value="Chromosome"/>
</dbReference>
<dbReference type="GO" id="GO:0010340">
    <property type="term" value="F:carboxyl-O-methyltransferase activity"/>
    <property type="evidence" value="ECO:0007669"/>
    <property type="project" value="UniProtKB-UniRule"/>
</dbReference>
<dbReference type="GO" id="GO:0102130">
    <property type="term" value="F:malonyl-CoA methyltransferase activity"/>
    <property type="evidence" value="ECO:0007669"/>
    <property type="project" value="UniProtKB-EC"/>
</dbReference>
<dbReference type="GO" id="GO:0008757">
    <property type="term" value="F:S-adenosylmethionine-dependent methyltransferase activity"/>
    <property type="evidence" value="ECO:0007669"/>
    <property type="project" value="InterPro"/>
</dbReference>
<dbReference type="GO" id="GO:0009102">
    <property type="term" value="P:biotin biosynthetic process"/>
    <property type="evidence" value="ECO:0007669"/>
    <property type="project" value="UniProtKB-UniRule"/>
</dbReference>
<dbReference type="GO" id="GO:0032259">
    <property type="term" value="P:methylation"/>
    <property type="evidence" value="ECO:0007669"/>
    <property type="project" value="UniProtKB-KW"/>
</dbReference>
<dbReference type="CDD" id="cd02440">
    <property type="entry name" value="AdoMet_MTases"/>
    <property type="match status" value="1"/>
</dbReference>
<dbReference type="Gene3D" id="3.40.50.150">
    <property type="entry name" value="Vaccinia Virus protein VP39"/>
    <property type="match status" value="1"/>
</dbReference>
<dbReference type="HAMAP" id="MF_00835">
    <property type="entry name" value="BioC"/>
    <property type="match status" value="1"/>
</dbReference>
<dbReference type="InterPro" id="IPR011814">
    <property type="entry name" value="BioC"/>
</dbReference>
<dbReference type="InterPro" id="IPR050602">
    <property type="entry name" value="Malonyl-ACP_OMT"/>
</dbReference>
<dbReference type="InterPro" id="IPR013216">
    <property type="entry name" value="Methyltransf_11"/>
</dbReference>
<dbReference type="InterPro" id="IPR029063">
    <property type="entry name" value="SAM-dependent_MTases_sf"/>
</dbReference>
<dbReference type="NCBIfam" id="TIGR02072">
    <property type="entry name" value="BioC"/>
    <property type="match status" value="1"/>
</dbReference>
<dbReference type="PANTHER" id="PTHR13090">
    <property type="entry name" value="ARGININE-HYDROXYLASE NDUFAF5, MITOCHONDRIAL"/>
    <property type="match status" value="1"/>
</dbReference>
<dbReference type="PANTHER" id="PTHR13090:SF1">
    <property type="entry name" value="ARGININE-HYDROXYLASE NDUFAF5, MITOCHONDRIAL"/>
    <property type="match status" value="1"/>
</dbReference>
<dbReference type="Pfam" id="PF08241">
    <property type="entry name" value="Methyltransf_11"/>
    <property type="match status" value="1"/>
</dbReference>
<dbReference type="SUPFAM" id="SSF53335">
    <property type="entry name" value="S-adenosyl-L-methionine-dependent methyltransferases"/>
    <property type="match status" value="1"/>
</dbReference>